<comment type="function">
    <text>Probable transcription factor, which may be involved, with other proteins, in establishing the pattern of cell type-specific gene expression in mesodermal cell subgroups.</text>
</comment>
<comment type="subunit">
    <text>Efficient DNA binding requires dimerization with another bHLH protein. Homodimer.</text>
</comment>
<comment type="subcellular location">
    <subcellularLocation>
        <location>Nucleus</location>
    </subcellularLocation>
</comment>
<comment type="tissue specificity">
    <text>Subset of mesodermal cells.</text>
</comment>
<comment type="induction">
    <text>Expressed in the mesoderm and the neural crest in response to two sequential early inductions (mesodermal and neural).</text>
</comment>
<reference key="1">
    <citation type="journal article" date="1989" name="Cell">
        <title>A Xenopus mRNA related to Drosophila twist is expressed in response to induction in the mesoderm and the neural crest.</title>
        <authorList>
            <person name="Hopwood N.D."/>
            <person name="Pluck A."/>
            <person name="Gurdon J.B."/>
        </authorList>
    </citation>
    <scope>NUCLEOTIDE SEQUENCE [MRNA]</scope>
</reference>
<reference key="2">
    <citation type="submission" date="2006-09" db="EMBL/GenBank/DDBJ databases">
        <authorList>
            <consortium name="NIH - Xenopus Gene Collection (XGC) project"/>
        </authorList>
    </citation>
    <scope>NUCLEOTIDE SEQUENCE [LARGE SCALE MRNA]</scope>
    <source>
        <tissue>Embryo</tissue>
    </source>
</reference>
<gene>
    <name type="primary">twist1</name>
    <name type="synonym">xtwi</name>
</gene>
<sequence length="166" mass="18796">MMQEESSSPVSPVDSLSNSEEELDKQQSKRGCRKRRSARKSPEDPDSPISVKRNKKASSTGSSPQSFEELQSQRVMANVRERQRTQSLNEAFSSLRKIIPTLPSDKLSKIQTLKLASRYIDFLCQVLQSDELDSKMASCSYVAHERLSYAFSVWRMEGAWSMSASH</sequence>
<feature type="chain" id="PRO_0000127493" description="Twist-related protein">
    <location>
        <begin position="1"/>
        <end position="166"/>
    </location>
</feature>
<feature type="domain" description="bHLH" evidence="1">
    <location>
        <begin position="72"/>
        <end position="123"/>
    </location>
</feature>
<feature type="region of interest" description="Disordered" evidence="2">
    <location>
        <begin position="1"/>
        <end position="83"/>
    </location>
</feature>
<feature type="compositionally biased region" description="Low complexity" evidence="2">
    <location>
        <begin position="1"/>
        <end position="18"/>
    </location>
</feature>
<feature type="compositionally biased region" description="Basic residues" evidence="2">
    <location>
        <begin position="28"/>
        <end position="39"/>
    </location>
</feature>
<feature type="compositionally biased region" description="Polar residues" evidence="2">
    <location>
        <begin position="57"/>
        <end position="75"/>
    </location>
</feature>
<organism>
    <name type="scientific">Xenopus laevis</name>
    <name type="common">African clawed frog</name>
    <dbReference type="NCBI Taxonomy" id="8355"/>
    <lineage>
        <taxon>Eukaryota</taxon>
        <taxon>Metazoa</taxon>
        <taxon>Chordata</taxon>
        <taxon>Craniata</taxon>
        <taxon>Vertebrata</taxon>
        <taxon>Euteleostomi</taxon>
        <taxon>Amphibia</taxon>
        <taxon>Batrachia</taxon>
        <taxon>Anura</taxon>
        <taxon>Pipoidea</taxon>
        <taxon>Pipidae</taxon>
        <taxon>Xenopodinae</taxon>
        <taxon>Xenopus</taxon>
        <taxon>Xenopus</taxon>
    </lineage>
</organism>
<dbReference type="EMBL" id="M27730">
    <property type="protein sequence ID" value="AAA50008.1"/>
    <property type="molecule type" value="mRNA"/>
</dbReference>
<dbReference type="EMBL" id="BC123238">
    <property type="protein sequence ID" value="AAI23239.1"/>
    <property type="molecule type" value="mRNA"/>
</dbReference>
<dbReference type="PIR" id="A33637">
    <property type="entry name" value="A33637"/>
</dbReference>
<dbReference type="RefSeq" id="NP_001079352.1">
    <property type="nucleotide sequence ID" value="NM_001085883.1"/>
</dbReference>
<dbReference type="SMR" id="P13903"/>
<dbReference type="BioGRID" id="97279">
    <property type="interactions" value="2"/>
</dbReference>
<dbReference type="DNASU" id="378698"/>
<dbReference type="GeneID" id="378698"/>
<dbReference type="KEGG" id="xla:378698"/>
<dbReference type="AGR" id="Xenbase:XB-GENE-865309"/>
<dbReference type="CTD" id="378698"/>
<dbReference type="Xenbase" id="XB-GENE-865309">
    <property type="gene designation" value="twist1.S"/>
</dbReference>
<dbReference type="OMA" id="XSSSAGI"/>
<dbReference type="OrthoDB" id="8583783at2759"/>
<dbReference type="Proteomes" id="UP000186698">
    <property type="component" value="Chromosome 6S"/>
</dbReference>
<dbReference type="Bgee" id="378698">
    <property type="expression patterns" value="Expressed in neurula embryo and 13 other cell types or tissues"/>
</dbReference>
<dbReference type="GO" id="GO:0005634">
    <property type="term" value="C:nucleus"/>
    <property type="evidence" value="ECO:0007669"/>
    <property type="project" value="UniProtKB-SubCell"/>
</dbReference>
<dbReference type="GO" id="GO:0000981">
    <property type="term" value="F:DNA-binding transcription factor activity, RNA polymerase II-specific"/>
    <property type="evidence" value="ECO:0000318"/>
    <property type="project" value="GO_Central"/>
</dbReference>
<dbReference type="GO" id="GO:0046983">
    <property type="term" value="F:protein dimerization activity"/>
    <property type="evidence" value="ECO:0007669"/>
    <property type="project" value="InterPro"/>
</dbReference>
<dbReference type="GO" id="GO:0000977">
    <property type="term" value="F:RNA polymerase II transcription regulatory region sequence-specific DNA binding"/>
    <property type="evidence" value="ECO:0000318"/>
    <property type="project" value="GO_Central"/>
</dbReference>
<dbReference type="GO" id="GO:0032502">
    <property type="term" value="P:developmental process"/>
    <property type="evidence" value="ECO:0000318"/>
    <property type="project" value="GO_Central"/>
</dbReference>
<dbReference type="GO" id="GO:0014029">
    <property type="term" value="P:neural crest formation"/>
    <property type="evidence" value="ECO:0000304"/>
    <property type="project" value="AgBase"/>
</dbReference>
<dbReference type="GO" id="GO:0006357">
    <property type="term" value="P:regulation of transcription by RNA polymerase II"/>
    <property type="evidence" value="ECO:0000318"/>
    <property type="project" value="GO_Central"/>
</dbReference>
<dbReference type="CDD" id="cd11412">
    <property type="entry name" value="bHLH_TS_TWIST1"/>
    <property type="match status" value="1"/>
</dbReference>
<dbReference type="FunFam" id="4.10.280.10:FF:000030">
    <property type="entry name" value="Twist transcription factor"/>
    <property type="match status" value="1"/>
</dbReference>
<dbReference type="Gene3D" id="4.10.280.10">
    <property type="entry name" value="Helix-loop-helix DNA-binding domain"/>
    <property type="match status" value="1"/>
</dbReference>
<dbReference type="InterPro" id="IPR011598">
    <property type="entry name" value="bHLH_dom"/>
</dbReference>
<dbReference type="InterPro" id="IPR050283">
    <property type="entry name" value="E-box_TF_Regulators"/>
</dbReference>
<dbReference type="InterPro" id="IPR036638">
    <property type="entry name" value="HLH_DNA-bd_sf"/>
</dbReference>
<dbReference type="InterPro" id="IPR047093">
    <property type="entry name" value="TWIST1_bHLH"/>
</dbReference>
<dbReference type="PANTHER" id="PTHR23349">
    <property type="entry name" value="BASIC HELIX-LOOP-HELIX TRANSCRIPTION FACTOR, TWIST"/>
    <property type="match status" value="1"/>
</dbReference>
<dbReference type="PANTHER" id="PTHR23349:SF70">
    <property type="entry name" value="TWIST-RELATED PROTEIN 2"/>
    <property type="match status" value="1"/>
</dbReference>
<dbReference type="Pfam" id="PF00010">
    <property type="entry name" value="HLH"/>
    <property type="match status" value="1"/>
</dbReference>
<dbReference type="SMART" id="SM00353">
    <property type="entry name" value="HLH"/>
    <property type="match status" value="1"/>
</dbReference>
<dbReference type="SUPFAM" id="SSF47459">
    <property type="entry name" value="HLH, helix-loop-helix DNA-binding domain"/>
    <property type="match status" value="1"/>
</dbReference>
<dbReference type="PROSITE" id="PS50888">
    <property type="entry name" value="BHLH"/>
    <property type="match status" value="1"/>
</dbReference>
<evidence type="ECO:0000255" key="1">
    <source>
        <dbReference type="PROSITE-ProRule" id="PRU00981"/>
    </source>
</evidence>
<evidence type="ECO:0000256" key="2">
    <source>
        <dbReference type="SAM" id="MobiDB-lite"/>
    </source>
</evidence>
<keyword id="KW-0217">Developmental protein</keyword>
<keyword id="KW-0221">Differentiation</keyword>
<keyword id="KW-0238">DNA-binding</keyword>
<keyword id="KW-0539">Nucleus</keyword>
<keyword id="KW-1185">Reference proteome</keyword>
<keyword id="KW-0804">Transcription</keyword>
<keyword id="KW-0805">Transcription regulation</keyword>
<accession>P13903</accession>
<accession>Q0IHA6</accession>
<proteinExistence type="evidence at transcript level"/>
<protein>
    <recommendedName>
        <fullName>Twist-related protein</fullName>
    </recommendedName>
    <alternativeName>
        <fullName>T18</fullName>
    </alternativeName>
    <alternativeName>
        <fullName>X-twist</fullName>
    </alternativeName>
</protein>
<name>TWIST_XENLA</name>